<gene>
    <name evidence="1" type="primary">gatA</name>
    <name type="ordered locus">M6_Spy1501</name>
</gene>
<protein>
    <recommendedName>
        <fullName evidence="1">Glutamyl-tRNA(Gln) amidotransferase subunit A</fullName>
        <shortName evidence="1">Glu-ADT subunit A</shortName>
        <ecNumber evidence="1">6.3.5.7</ecNumber>
    </recommendedName>
</protein>
<feature type="chain" id="PRO_0000105215" description="Glutamyl-tRNA(Gln) amidotransferase subunit A">
    <location>
        <begin position="1"/>
        <end position="488"/>
    </location>
</feature>
<feature type="active site" description="Charge relay system" evidence="1">
    <location>
        <position position="77"/>
    </location>
</feature>
<feature type="active site" description="Charge relay system" evidence="1">
    <location>
        <position position="152"/>
    </location>
</feature>
<feature type="active site" description="Acyl-ester intermediate" evidence="1">
    <location>
        <position position="176"/>
    </location>
</feature>
<dbReference type="EC" id="6.3.5.7" evidence="1"/>
<dbReference type="EMBL" id="CP000003">
    <property type="protein sequence ID" value="AAT87636.1"/>
    <property type="molecule type" value="Genomic_DNA"/>
</dbReference>
<dbReference type="RefSeq" id="WP_011184880.1">
    <property type="nucleotide sequence ID" value="NC_006086.1"/>
</dbReference>
<dbReference type="SMR" id="Q5XAC7"/>
<dbReference type="KEGG" id="spa:M6_Spy1501"/>
<dbReference type="HOGENOM" id="CLU_009600_0_3_9"/>
<dbReference type="Proteomes" id="UP000001167">
    <property type="component" value="Chromosome"/>
</dbReference>
<dbReference type="GO" id="GO:0030956">
    <property type="term" value="C:glutamyl-tRNA(Gln) amidotransferase complex"/>
    <property type="evidence" value="ECO:0007669"/>
    <property type="project" value="InterPro"/>
</dbReference>
<dbReference type="GO" id="GO:0005524">
    <property type="term" value="F:ATP binding"/>
    <property type="evidence" value="ECO:0007669"/>
    <property type="project" value="UniProtKB-KW"/>
</dbReference>
<dbReference type="GO" id="GO:0050567">
    <property type="term" value="F:glutaminyl-tRNA synthase (glutamine-hydrolyzing) activity"/>
    <property type="evidence" value="ECO:0007669"/>
    <property type="project" value="UniProtKB-UniRule"/>
</dbReference>
<dbReference type="GO" id="GO:0006412">
    <property type="term" value="P:translation"/>
    <property type="evidence" value="ECO:0007669"/>
    <property type="project" value="UniProtKB-UniRule"/>
</dbReference>
<dbReference type="Gene3D" id="3.90.1300.10">
    <property type="entry name" value="Amidase signature (AS) domain"/>
    <property type="match status" value="1"/>
</dbReference>
<dbReference type="HAMAP" id="MF_00120">
    <property type="entry name" value="GatA"/>
    <property type="match status" value="1"/>
</dbReference>
<dbReference type="InterPro" id="IPR000120">
    <property type="entry name" value="Amidase"/>
</dbReference>
<dbReference type="InterPro" id="IPR020556">
    <property type="entry name" value="Amidase_CS"/>
</dbReference>
<dbReference type="InterPro" id="IPR023631">
    <property type="entry name" value="Amidase_dom"/>
</dbReference>
<dbReference type="InterPro" id="IPR036928">
    <property type="entry name" value="AS_sf"/>
</dbReference>
<dbReference type="InterPro" id="IPR004412">
    <property type="entry name" value="GatA"/>
</dbReference>
<dbReference type="NCBIfam" id="TIGR00132">
    <property type="entry name" value="gatA"/>
    <property type="match status" value="1"/>
</dbReference>
<dbReference type="PANTHER" id="PTHR11895:SF151">
    <property type="entry name" value="GLUTAMYL-TRNA(GLN) AMIDOTRANSFERASE SUBUNIT A"/>
    <property type="match status" value="1"/>
</dbReference>
<dbReference type="PANTHER" id="PTHR11895">
    <property type="entry name" value="TRANSAMIDASE"/>
    <property type="match status" value="1"/>
</dbReference>
<dbReference type="Pfam" id="PF01425">
    <property type="entry name" value="Amidase"/>
    <property type="match status" value="1"/>
</dbReference>
<dbReference type="SUPFAM" id="SSF75304">
    <property type="entry name" value="Amidase signature (AS) enzymes"/>
    <property type="match status" value="1"/>
</dbReference>
<dbReference type="PROSITE" id="PS00571">
    <property type="entry name" value="AMIDASES"/>
    <property type="match status" value="1"/>
</dbReference>
<name>GATA_STRP6</name>
<proteinExistence type="inferred from homology"/>
<organism>
    <name type="scientific">Streptococcus pyogenes serotype M6 (strain ATCC BAA-946 / MGAS10394)</name>
    <dbReference type="NCBI Taxonomy" id="286636"/>
    <lineage>
        <taxon>Bacteria</taxon>
        <taxon>Bacillati</taxon>
        <taxon>Bacillota</taxon>
        <taxon>Bacilli</taxon>
        <taxon>Lactobacillales</taxon>
        <taxon>Streptococcaceae</taxon>
        <taxon>Streptococcus</taxon>
    </lineage>
</organism>
<comment type="function">
    <text evidence="1">Allows the formation of correctly charged Gln-tRNA(Gln) through the transamidation of misacylated Glu-tRNA(Gln) in organisms which lack glutaminyl-tRNA synthetase. The reaction takes place in the presence of glutamine and ATP through an activated gamma-phospho-Glu-tRNA(Gln).</text>
</comment>
<comment type="catalytic activity">
    <reaction evidence="1">
        <text>L-glutamyl-tRNA(Gln) + L-glutamine + ATP + H2O = L-glutaminyl-tRNA(Gln) + L-glutamate + ADP + phosphate + H(+)</text>
        <dbReference type="Rhea" id="RHEA:17521"/>
        <dbReference type="Rhea" id="RHEA-COMP:9681"/>
        <dbReference type="Rhea" id="RHEA-COMP:9684"/>
        <dbReference type="ChEBI" id="CHEBI:15377"/>
        <dbReference type="ChEBI" id="CHEBI:15378"/>
        <dbReference type="ChEBI" id="CHEBI:29985"/>
        <dbReference type="ChEBI" id="CHEBI:30616"/>
        <dbReference type="ChEBI" id="CHEBI:43474"/>
        <dbReference type="ChEBI" id="CHEBI:58359"/>
        <dbReference type="ChEBI" id="CHEBI:78520"/>
        <dbReference type="ChEBI" id="CHEBI:78521"/>
        <dbReference type="ChEBI" id="CHEBI:456216"/>
        <dbReference type="EC" id="6.3.5.7"/>
    </reaction>
</comment>
<comment type="subunit">
    <text evidence="1">Heterotrimer of A, B and C subunits.</text>
</comment>
<comment type="similarity">
    <text evidence="1">Belongs to the amidase family. GatA subfamily.</text>
</comment>
<accession>Q5XAC7</accession>
<reference key="1">
    <citation type="journal article" date="2004" name="J. Infect. Dis.">
        <title>Progress toward characterization of the group A Streptococcus metagenome: complete genome sequence of a macrolide-resistant serotype M6 strain.</title>
        <authorList>
            <person name="Banks D.J."/>
            <person name="Porcella S.F."/>
            <person name="Barbian K.D."/>
            <person name="Beres S.B."/>
            <person name="Philips L.E."/>
            <person name="Voyich J.M."/>
            <person name="DeLeo F.R."/>
            <person name="Martin J.M."/>
            <person name="Somerville G.A."/>
            <person name="Musser J.M."/>
        </authorList>
    </citation>
    <scope>NUCLEOTIDE SEQUENCE [LARGE SCALE GENOMIC DNA]</scope>
    <source>
        <strain>ATCC BAA-946 / MGAS10394</strain>
    </source>
</reference>
<evidence type="ECO:0000255" key="1">
    <source>
        <dbReference type="HAMAP-Rule" id="MF_00120"/>
    </source>
</evidence>
<keyword id="KW-0067">ATP-binding</keyword>
<keyword id="KW-0436">Ligase</keyword>
<keyword id="KW-0547">Nucleotide-binding</keyword>
<keyword id="KW-0648">Protein biosynthesis</keyword>
<sequence>MSFNHKTIEELHDLLVAKEISATELTQKTLEDIKSREEAVGSFITVSEEAALRQAAAIDAKGIDADNLMSGIPLAVKDNISTKGILTTAASKMLYNYEPIFDATSVANAYAKDMIVIGKTNMDEFAMGGSTETSYFKKTKNAWDHTKVPGGSSGGSATAVASGQVRLSLGSDTGGSIRQPAAFNGVVGLKPTYGTVSRYGLIAFGSSLDQIGPFAPTVKENAQLLNVIASSDVKDATSAPVRIADYTSKIGRDIKGMKIALPKEYLGEGIDPEIKETVLAAAKQFEALGATVEEVSLPHSKYGVAVYYIIASSEASSNLQRFDGIRYGFRADDAKNLDEIYVNTRSQGFGDEVKRRIMLGTFSLSSGYYDAYFKKAGQVRTLIIQDFDKVFADYDLILGPTTPTVAFGLDTLNHDPVAMYLADLLTIPVNLAGLPGISIPAGFVDGLPVGLQLIGPKYAEETIYQAAAAFEAVTDYHKQQPIIFGGDK</sequence>